<proteinExistence type="inferred from homology"/>
<accession>C4KJU6</accession>
<protein>
    <recommendedName>
        <fullName evidence="1">GMP synthase [glutamine-hydrolyzing] subunit B</fullName>
        <ecNumber evidence="1">6.3.5.2</ecNumber>
    </recommendedName>
    <alternativeName>
        <fullName evidence="1">GMP synthetase</fullName>
    </alternativeName>
</protein>
<organism>
    <name type="scientific">Saccharolobus islandicus (strain M.16.4 / Kamchatka #3)</name>
    <name type="common">Sulfolobus islandicus</name>
    <dbReference type="NCBI Taxonomy" id="426118"/>
    <lineage>
        <taxon>Archaea</taxon>
        <taxon>Thermoproteota</taxon>
        <taxon>Thermoprotei</taxon>
        <taxon>Sulfolobales</taxon>
        <taxon>Sulfolobaceae</taxon>
        <taxon>Saccharolobus</taxon>
    </lineage>
</organism>
<keyword id="KW-0067">ATP-binding</keyword>
<keyword id="KW-0332">GMP biosynthesis</keyword>
<keyword id="KW-0436">Ligase</keyword>
<keyword id="KW-0547">Nucleotide-binding</keyword>
<keyword id="KW-0658">Purine biosynthesis</keyword>
<gene>
    <name evidence="1" type="primary">guaAB</name>
    <name type="ordered locus">M164_2138</name>
</gene>
<dbReference type="EC" id="6.3.5.2" evidence="1"/>
<dbReference type="EMBL" id="CP001402">
    <property type="protein sequence ID" value="ACR42741.1"/>
    <property type="molecule type" value="Genomic_DNA"/>
</dbReference>
<dbReference type="RefSeq" id="WP_012712098.1">
    <property type="nucleotide sequence ID" value="NC_012726.1"/>
</dbReference>
<dbReference type="SMR" id="C4KJU6"/>
<dbReference type="KEGG" id="sid:M164_2138"/>
<dbReference type="HOGENOM" id="CLU_014340_0_0_2"/>
<dbReference type="UniPathway" id="UPA00189">
    <property type="reaction ID" value="UER00296"/>
</dbReference>
<dbReference type="Proteomes" id="UP000001479">
    <property type="component" value="Chromosome"/>
</dbReference>
<dbReference type="GO" id="GO:0005829">
    <property type="term" value="C:cytosol"/>
    <property type="evidence" value="ECO:0007669"/>
    <property type="project" value="TreeGrafter"/>
</dbReference>
<dbReference type="GO" id="GO:0005524">
    <property type="term" value="F:ATP binding"/>
    <property type="evidence" value="ECO:0007669"/>
    <property type="project" value="UniProtKB-UniRule"/>
</dbReference>
<dbReference type="GO" id="GO:0003921">
    <property type="term" value="F:GMP synthase activity"/>
    <property type="evidence" value="ECO:0007669"/>
    <property type="project" value="InterPro"/>
</dbReference>
<dbReference type="CDD" id="cd01997">
    <property type="entry name" value="GMP_synthase_C"/>
    <property type="match status" value="1"/>
</dbReference>
<dbReference type="Gene3D" id="3.30.300.10">
    <property type="match status" value="2"/>
</dbReference>
<dbReference type="Gene3D" id="3.40.50.620">
    <property type="entry name" value="HUPs"/>
    <property type="match status" value="1"/>
</dbReference>
<dbReference type="HAMAP" id="MF_00345">
    <property type="entry name" value="GMP_synthase_B"/>
    <property type="match status" value="1"/>
</dbReference>
<dbReference type="InterPro" id="IPR001674">
    <property type="entry name" value="GMP_synth_C"/>
</dbReference>
<dbReference type="InterPro" id="IPR026598">
    <property type="entry name" value="GMP_synthase_B"/>
</dbReference>
<dbReference type="InterPro" id="IPR025777">
    <property type="entry name" value="GMPS_ATP_PPase_dom"/>
</dbReference>
<dbReference type="InterPro" id="IPR022310">
    <property type="entry name" value="NAD/GMP_synthase"/>
</dbReference>
<dbReference type="InterPro" id="IPR014729">
    <property type="entry name" value="Rossmann-like_a/b/a_fold"/>
</dbReference>
<dbReference type="PANTHER" id="PTHR11922:SF2">
    <property type="entry name" value="GMP SYNTHASE [GLUTAMINE-HYDROLYZING]"/>
    <property type="match status" value="1"/>
</dbReference>
<dbReference type="PANTHER" id="PTHR11922">
    <property type="entry name" value="GMP SYNTHASE-RELATED"/>
    <property type="match status" value="1"/>
</dbReference>
<dbReference type="Pfam" id="PF00958">
    <property type="entry name" value="GMP_synt_C"/>
    <property type="match status" value="1"/>
</dbReference>
<dbReference type="Pfam" id="PF02540">
    <property type="entry name" value="NAD_synthase"/>
    <property type="match status" value="1"/>
</dbReference>
<dbReference type="SUPFAM" id="SSF52402">
    <property type="entry name" value="Adenine nucleotide alpha hydrolases-like"/>
    <property type="match status" value="1"/>
</dbReference>
<dbReference type="SUPFAM" id="SSF54810">
    <property type="entry name" value="GMP synthetase C-terminal dimerisation domain"/>
    <property type="match status" value="1"/>
</dbReference>
<dbReference type="PROSITE" id="PS51553">
    <property type="entry name" value="GMPS_ATP_PPASE"/>
    <property type="match status" value="1"/>
</dbReference>
<comment type="function">
    <text evidence="1">Catalyzes the synthesis of GMP from XMP.</text>
</comment>
<comment type="catalytic activity">
    <reaction evidence="1">
        <text>XMP + L-glutamine + ATP + H2O = GMP + L-glutamate + AMP + diphosphate + 2 H(+)</text>
        <dbReference type="Rhea" id="RHEA:11680"/>
        <dbReference type="ChEBI" id="CHEBI:15377"/>
        <dbReference type="ChEBI" id="CHEBI:15378"/>
        <dbReference type="ChEBI" id="CHEBI:29985"/>
        <dbReference type="ChEBI" id="CHEBI:30616"/>
        <dbReference type="ChEBI" id="CHEBI:33019"/>
        <dbReference type="ChEBI" id="CHEBI:57464"/>
        <dbReference type="ChEBI" id="CHEBI:58115"/>
        <dbReference type="ChEBI" id="CHEBI:58359"/>
        <dbReference type="ChEBI" id="CHEBI:456215"/>
        <dbReference type="EC" id="6.3.5.2"/>
    </reaction>
</comment>
<comment type="pathway">
    <text evidence="1">Purine metabolism; GMP biosynthesis; GMP from XMP (L-Gln route): step 1/1.</text>
</comment>
<comment type="subunit">
    <text evidence="1">Heterodimer composed of a glutamine amidotransferase subunit (A) and a GMP-binding subunit (B).</text>
</comment>
<reference key="1">
    <citation type="journal article" date="2009" name="Proc. Natl. Acad. Sci. U.S.A.">
        <title>Biogeography of the Sulfolobus islandicus pan-genome.</title>
        <authorList>
            <person name="Reno M.L."/>
            <person name="Held N.L."/>
            <person name="Fields C.J."/>
            <person name="Burke P.V."/>
            <person name="Whitaker R.J."/>
        </authorList>
    </citation>
    <scope>NUCLEOTIDE SEQUENCE [LARGE SCALE GENOMIC DNA]</scope>
    <source>
        <strain>M.16.4 / Kamchatka #3</strain>
    </source>
</reference>
<name>GUAAB_SACI6</name>
<feature type="chain" id="PRO_1000205315" description="GMP synthase [glutamine-hydrolyzing] subunit B">
    <location>
        <begin position="1"/>
        <end position="367"/>
    </location>
</feature>
<feature type="domain" description="GMPS ATP-PPase" evidence="1">
    <location>
        <begin position="2"/>
        <end position="190"/>
    </location>
</feature>
<feature type="binding site" evidence="1">
    <location>
        <begin position="29"/>
        <end position="35"/>
    </location>
    <ligand>
        <name>ATP</name>
        <dbReference type="ChEBI" id="CHEBI:30616"/>
    </ligand>
</feature>
<sequence length="367" mass="41219">MFDPASFVKEIGPQLKQKVGNERVLAAVSGGVDSTTAAVLAYNLLGNKVIPVLIDTGFLRKNEAEKIKAYLSNVLPNLIVVDERETFTSEIEGMEEAEAKRKKFRELFYSSISSLMRKFNAKYLMQGTIAADWVETQGGIKTQHNVLVQIGIDTEKEWGFTLIEPLADLYKNEVRELARYLKLPKEISERQPFPGPGLLVRTIGKLTREKLEVVREANDIVEKYLDPFNYSQYFAVSFESDGNFVILDGIDAFLYKARATGVKGDVRAYGNIAKVECSDINAAKSFVDTLVKYDITHVLCSLDERSNGKYSIAIRAVITEDFMTADYARIPKEVLEKISSEILQKIPNVKEVLYDVTSKPPATIEFE</sequence>
<evidence type="ECO:0000255" key="1">
    <source>
        <dbReference type="HAMAP-Rule" id="MF_00345"/>
    </source>
</evidence>